<proteinExistence type="inferred from homology"/>
<dbReference type="EC" id="2.8.1.9" evidence="2"/>
<dbReference type="EMBL" id="AAHF01000005">
    <property type="protein sequence ID" value="EAL89888.1"/>
    <property type="molecule type" value="Genomic_DNA"/>
</dbReference>
<dbReference type="RefSeq" id="XP_751926.1">
    <property type="nucleotide sequence ID" value="XM_746833.1"/>
</dbReference>
<dbReference type="SMR" id="Q4WPE6"/>
<dbReference type="STRING" id="330879.Q4WPE6"/>
<dbReference type="EnsemblFungi" id="EAL89888">
    <property type="protein sequence ID" value="EAL89888"/>
    <property type="gene ID" value="AFUA_4G08990"/>
</dbReference>
<dbReference type="GeneID" id="3509443"/>
<dbReference type="KEGG" id="afm:AFUA_4G08990"/>
<dbReference type="VEuPathDB" id="FungiDB:Afu4g08990"/>
<dbReference type="eggNOG" id="KOG2142">
    <property type="taxonomic scope" value="Eukaryota"/>
</dbReference>
<dbReference type="HOGENOM" id="CLU_010913_0_0_1"/>
<dbReference type="InParanoid" id="Q4WPE6"/>
<dbReference type="OMA" id="PCTRCQM"/>
<dbReference type="OrthoDB" id="10264306at2759"/>
<dbReference type="UniPathway" id="UPA00344"/>
<dbReference type="Proteomes" id="UP000002530">
    <property type="component" value="Chromosome 4"/>
</dbReference>
<dbReference type="GO" id="GO:0016829">
    <property type="term" value="F:lyase activity"/>
    <property type="evidence" value="ECO:0007669"/>
    <property type="project" value="UniProtKB-UniRule"/>
</dbReference>
<dbReference type="GO" id="GO:0008265">
    <property type="term" value="F:molybdenum cofactor sulfurtransferase activity"/>
    <property type="evidence" value="ECO:0000318"/>
    <property type="project" value="GO_Central"/>
</dbReference>
<dbReference type="GO" id="GO:0030151">
    <property type="term" value="F:molybdenum ion binding"/>
    <property type="evidence" value="ECO:0007669"/>
    <property type="project" value="UniProtKB-UniRule"/>
</dbReference>
<dbReference type="GO" id="GO:0030170">
    <property type="term" value="F:pyridoxal phosphate binding"/>
    <property type="evidence" value="ECO:0007669"/>
    <property type="project" value="UniProtKB-UniRule"/>
</dbReference>
<dbReference type="GO" id="GO:0006777">
    <property type="term" value="P:Mo-molybdopterin cofactor biosynthetic process"/>
    <property type="evidence" value="ECO:0007669"/>
    <property type="project" value="UniProtKB-UniRule"/>
</dbReference>
<dbReference type="GO" id="GO:0043545">
    <property type="term" value="P:molybdopterin cofactor metabolic process"/>
    <property type="evidence" value="ECO:0000318"/>
    <property type="project" value="GO_Central"/>
</dbReference>
<dbReference type="Gene3D" id="3.90.1150.10">
    <property type="entry name" value="Aspartate Aminotransferase, domain 1"/>
    <property type="match status" value="1"/>
</dbReference>
<dbReference type="Gene3D" id="3.40.640.10">
    <property type="entry name" value="Type I PLP-dependent aspartate aminotransferase-like (Major domain)"/>
    <property type="match status" value="1"/>
</dbReference>
<dbReference type="HAMAP" id="MF_03050">
    <property type="entry name" value="MOCOS"/>
    <property type="match status" value="1"/>
</dbReference>
<dbReference type="InterPro" id="IPR000192">
    <property type="entry name" value="Aminotrans_V_dom"/>
</dbReference>
<dbReference type="InterPro" id="IPR005302">
    <property type="entry name" value="MoCF_Sase_C"/>
</dbReference>
<dbReference type="InterPro" id="IPR028886">
    <property type="entry name" value="MoCo_sulfurase"/>
</dbReference>
<dbReference type="InterPro" id="IPR005303">
    <property type="entry name" value="MOCOS_middle"/>
</dbReference>
<dbReference type="InterPro" id="IPR015424">
    <property type="entry name" value="PyrdxlP-dep_Trfase"/>
</dbReference>
<dbReference type="InterPro" id="IPR015421">
    <property type="entry name" value="PyrdxlP-dep_Trfase_major"/>
</dbReference>
<dbReference type="InterPro" id="IPR015422">
    <property type="entry name" value="PyrdxlP-dep_Trfase_small"/>
</dbReference>
<dbReference type="PANTHER" id="PTHR14237:SF19">
    <property type="entry name" value="MITOCHONDRIAL AMIDOXIME REDUCING COMPONENT 1"/>
    <property type="match status" value="1"/>
</dbReference>
<dbReference type="PANTHER" id="PTHR14237">
    <property type="entry name" value="MOLYBDOPTERIN COFACTOR SULFURASE MOSC"/>
    <property type="match status" value="1"/>
</dbReference>
<dbReference type="Pfam" id="PF00266">
    <property type="entry name" value="Aminotran_5"/>
    <property type="match status" value="1"/>
</dbReference>
<dbReference type="Pfam" id="PF03473">
    <property type="entry name" value="MOSC"/>
    <property type="match status" value="1"/>
</dbReference>
<dbReference type="Pfam" id="PF03476">
    <property type="entry name" value="MOSC_N"/>
    <property type="match status" value="1"/>
</dbReference>
<dbReference type="SUPFAM" id="SSF141673">
    <property type="entry name" value="MOSC N-terminal domain-like"/>
    <property type="match status" value="1"/>
</dbReference>
<dbReference type="SUPFAM" id="SSF53383">
    <property type="entry name" value="PLP-dependent transferases"/>
    <property type="match status" value="1"/>
</dbReference>
<dbReference type="PROSITE" id="PS51340">
    <property type="entry name" value="MOSC"/>
    <property type="match status" value="1"/>
</dbReference>
<protein>
    <recommendedName>
        <fullName evidence="2">Molybdenum cofactor sulfurase</fullName>
        <shortName evidence="2">MCS</shortName>
        <shortName evidence="2">MOS</shortName>
        <shortName evidence="2">MoCo sulfurase</shortName>
        <ecNumber evidence="2">2.8.1.9</ecNumber>
    </recommendedName>
    <alternativeName>
        <fullName evidence="2">Molybdenum cofactor sulfurtransferase</fullName>
    </alternativeName>
</protein>
<keyword id="KW-0501">Molybdenum cofactor biosynthesis</keyword>
<keyword id="KW-0663">Pyridoxal phosphate</keyword>
<keyword id="KW-1185">Reference proteome</keyword>
<keyword id="KW-0808">Transferase</keyword>
<comment type="function">
    <text evidence="2">Sulfurates the molybdenum cofactor. Sulfation of molybdenum is essential for xanthine dehydrogenase (XDH) and aldehyde oxidase (ADO) enzymes in which molybdenum cofactor is liganded by 1 oxygen and 1 sulfur atom in active form.</text>
</comment>
<comment type="catalytic activity">
    <reaction evidence="2">
        <text>Mo-molybdopterin + L-cysteine + AH2 = thio-Mo-molybdopterin + L-alanine + A + H2O</text>
        <dbReference type="Rhea" id="RHEA:42636"/>
        <dbReference type="ChEBI" id="CHEBI:13193"/>
        <dbReference type="ChEBI" id="CHEBI:15377"/>
        <dbReference type="ChEBI" id="CHEBI:17499"/>
        <dbReference type="ChEBI" id="CHEBI:35235"/>
        <dbReference type="ChEBI" id="CHEBI:57972"/>
        <dbReference type="ChEBI" id="CHEBI:71302"/>
        <dbReference type="ChEBI" id="CHEBI:82685"/>
        <dbReference type="EC" id="2.8.1.9"/>
    </reaction>
</comment>
<comment type="cofactor">
    <cofactor evidence="2">
        <name>pyridoxal 5'-phosphate</name>
        <dbReference type="ChEBI" id="CHEBI:597326"/>
    </cofactor>
</comment>
<comment type="pathway">
    <text evidence="1">Cofactor biosynthesis; molybdopterin biosynthesis.</text>
</comment>
<comment type="similarity">
    <text evidence="2">Belongs to the class-V pyridoxal-phosphate-dependent aminotransferase family. MOCOS subfamily.</text>
</comment>
<sequence>MVGVTSCEEEILEYGRGYSEDVDTIREREYPQLKDTTYLDHAGTTLYAKSLIESFSRELTSNLFGNPHSLSTSSQLSTQRVDDVRLRALRFFKADPEEFDLVFVANATAAIKLVADGMRDSTRQGFWYGYHVDAHTSLVGVRELAEKGGRCFTSDDEVEDWISRLCDVRSESLKLFAYPAQSNMNGRRLPFSWCKKIRDQGETTGGNVYTLLDAASLVSTSPLDLSDASAAPDFTVLSFYKIFGFPDLGALIVRKSAGQIFEHRRYFGGGTVDMVLTRGLQWHAKKQSSIHDRLEDGTLPFHNIIALDSAFATHERLFGSMQNISSHTRFLAKRLYDRLNALRHFNGQRVCELYKSPRSDYNQPSTQGPIIAFNLRNSQGSWIGKSEVERLAATKNIQIRSGSLCNPGGTSGSLGWTGADLLQQFSAGLRCGDDHDVMDGRPTGVLRLSLGPMTNLEDINTFVELVEEFYVEKAATVDSLVAPVHSVPLQQPRFYIESLSLYPIKSCGPFKVPDGRRWEIRREGLAWDREWCLIHQGTGAALNQKKYPRMALIRPSIDLDRNVLRVTCGEPGSTDQKLLEVSLLRENTELATTSLCQRTSKASTVCGDQVTVQAYTSPPVAQFFSDFLGVPCTLARFPPHSSTRYASPRKAPGAWKQYLRKFVMPGSFPQDPSPPPAEKHPILLSNESPILLISRSSVNYLNENIKANQKKIRTGTSKAVAADVFRANIVVAESLADSPKMEQPYIEDQWEALKIGPGELRFDVLGSCQRCSMVCIDQFTGVRRDEPFSTLAKTRKINNKIVFGRHCSLSASEVTQDQHDNAERWTLMVGDIVIPSYAHDYTL</sequence>
<organism>
    <name type="scientific">Aspergillus fumigatus (strain ATCC MYA-4609 / CBS 101355 / FGSC A1100 / Af293)</name>
    <name type="common">Neosartorya fumigata</name>
    <dbReference type="NCBI Taxonomy" id="330879"/>
    <lineage>
        <taxon>Eukaryota</taxon>
        <taxon>Fungi</taxon>
        <taxon>Dikarya</taxon>
        <taxon>Ascomycota</taxon>
        <taxon>Pezizomycotina</taxon>
        <taxon>Eurotiomycetes</taxon>
        <taxon>Eurotiomycetidae</taxon>
        <taxon>Eurotiales</taxon>
        <taxon>Aspergillaceae</taxon>
        <taxon>Aspergillus</taxon>
        <taxon>Aspergillus subgen. Fumigati</taxon>
    </lineage>
</organism>
<gene>
    <name evidence="2" type="primary">hxB</name>
    <name type="ORF">AFUA_4G08990</name>
</gene>
<feature type="chain" id="PRO_0000249961" description="Molybdenum cofactor sulfurase">
    <location>
        <begin position="1"/>
        <end position="843"/>
    </location>
</feature>
<feature type="domain" description="MOSC" evidence="2">
    <location>
        <begin position="657"/>
        <end position="836"/>
    </location>
</feature>
<feature type="active site" evidence="2">
    <location>
        <position position="405"/>
    </location>
</feature>
<feature type="modified residue" description="N6-(pyridoxal phosphate)lysine" evidence="2">
    <location>
        <position position="241"/>
    </location>
</feature>
<accession>Q4WPE6</accession>
<reference key="1">
    <citation type="journal article" date="2005" name="Nature">
        <title>Genomic sequence of the pathogenic and allergenic filamentous fungus Aspergillus fumigatus.</title>
        <authorList>
            <person name="Nierman W.C."/>
            <person name="Pain A."/>
            <person name="Anderson M.J."/>
            <person name="Wortman J.R."/>
            <person name="Kim H.S."/>
            <person name="Arroyo J."/>
            <person name="Berriman M."/>
            <person name="Abe K."/>
            <person name="Archer D.B."/>
            <person name="Bermejo C."/>
            <person name="Bennett J.W."/>
            <person name="Bowyer P."/>
            <person name="Chen D."/>
            <person name="Collins M."/>
            <person name="Coulsen R."/>
            <person name="Davies R."/>
            <person name="Dyer P.S."/>
            <person name="Farman M.L."/>
            <person name="Fedorova N."/>
            <person name="Fedorova N.D."/>
            <person name="Feldblyum T.V."/>
            <person name="Fischer R."/>
            <person name="Fosker N."/>
            <person name="Fraser A."/>
            <person name="Garcia J.L."/>
            <person name="Garcia M.J."/>
            <person name="Goble A."/>
            <person name="Goldman G.H."/>
            <person name="Gomi K."/>
            <person name="Griffith-Jones S."/>
            <person name="Gwilliam R."/>
            <person name="Haas B.J."/>
            <person name="Haas H."/>
            <person name="Harris D.E."/>
            <person name="Horiuchi H."/>
            <person name="Huang J."/>
            <person name="Humphray S."/>
            <person name="Jimenez J."/>
            <person name="Keller N."/>
            <person name="Khouri H."/>
            <person name="Kitamoto K."/>
            <person name="Kobayashi T."/>
            <person name="Konzack S."/>
            <person name="Kulkarni R."/>
            <person name="Kumagai T."/>
            <person name="Lafton A."/>
            <person name="Latge J.-P."/>
            <person name="Li W."/>
            <person name="Lord A."/>
            <person name="Lu C."/>
            <person name="Majoros W.H."/>
            <person name="May G.S."/>
            <person name="Miller B.L."/>
            <person name="Mohamoud Y."/>
            <person name="Molina M."/>
            <person name="Monod M."/>
            <person name="Mouyna I."/>
            <person name="Mulligan S."/>
            <person name="Murphy L.D."/>
            <person name="O'Neil S."/>
            <person name="Paulsen I."/>
            <person name="Penalva M.A."/>
            <person name="Pertea M."/>
            <person name="Price C."/>
            <person name="Pritchard B.L."/>
            <person name="Quail M.A."/>
            <person name="Rabbinowitsch E."/>
            <person name="Rawlins N."/>
            <person name="Rajandream M.A."/>
            <person name="Reichard U."/>
            <person name="Renauld H."/>
            <person name="Robson G.D."/>
            <person name="Rodriguez de Cordoba S."/>
            <person name="Rodriguez-Pena J.M."/>
            <person name="Ronning C.M."/>
            <person name="Rutter S."/>
            <person name="Salzberg S.L."/>
            <person name="Sanchez M."/>
            <person name="Sanchez-Ferrero J.C."/>
            <person name="Saunders D."/>
            <person name="Seeger K."/>
            <person name="Squares R."/>
            <person name="Squares S."/>
            <person name="Takeuchi M."/>
            <person name="Tekaia F."/>
            <person name="Turner G."/>
            <person name="Vazquez de Aldana C.R."/>
            <person name="Weidman J."/>
            <person name="White O."/>
            <person name="Woodward J.R."/>
            <person name="Yu J.-H."/>
            <person name="Fraser C.M."/>
            <person name="Galagan J.E."/>
            <person name="Asai K."/>
            <person name="Machida M."/>
            <person name="Hall N."/>
            <person name="Barrell B.G."/>
            <person name="Denning D.W."/>
        </authorList>
    </citation>
    <scope>NUCLEOTIDE SEQUENCE [LARGE SCALE GENOMIC DNA]</scope>
    <source>
        <strain>ATCC MYA-4609 / CBS 101355 / FGSC A1100 / Af293</strain>
    </source>
</reference>
<name>MOCOS_ASPFU</name>
<evidence type="ECO:0000250" key="1">
    <source>
        <dbReference type="UniProtKB" id="Q96EN8"/>
    </source>
</evidence>
<evidence type="ECO:0000255" key="2">
    <source>
        <dbReference type="HAMAP-Rule" id="MF_03050"/>
    </source>
</evidence>